<keyword id="KW-0067">ATP-binding</keyword>
<keyword id="KW-0963">Cytoplasm</keyword>
<keyword id="KW-0227">DNA damage</keyword>
<keyword id="KW-0233">DNA recombination</keyword>
<keyword id="KW-0234">DNA repair</keyword>
<keyword id="KW-0238">DNA-binding</keyword>
<keyword id="KW-0547">Nucleotide-binding</keyword>
<keyword id="KW-1185">Reference proteome</keyword>
<keyword id="KW-0742">SOS response</keyword>
<reference key="1">
    <citation type="journal article" date="2009" name="PLoS ONE">
        <title>Non mycobacterial virulence genes in the genome of the emerging pathogen Mycobacterium abscessus.</title>
        <authorList>
            <person name="Ripoll F."/>
            <person name="Pasek S."/>
            <person name="Schenowitz C."/>
            <person name="Dossat C."/>
            <person name="Barbe V."/>
            <person name="Rottman M."/>
            <person name="Macheras E."/>
            <person name="Heym B."/>
            <person name="Herrmann J.L."/>
            <person name="Daffe M."/>
            <person name="Brosch R."/>
            <person name="Risler J.L."/>
            <person name="Gaillard J.L."/>
        </authorList>
    </citation>
    <scope>NUCLEOTIDE SEQUENCE [LARGE SCALE GENOMIC DNA]</scope>
    <source>
        <strain>ATCC 19977 / DSM 44196 / CCUG 20993 / CIP 104536 / JCM 13569 / NCTC 13031 / TMC 1543 / L948</strain>
    </source>
</reference>
<protein>
    <recommendedName>
        <fullName evidence="1">Protein RecA</fullName>
    </recommendedName>
    <alternativeName>
        <fullName evidence="1">Recombinase A</fullName>
    </alternativeName>
</protein>
<comment type="function">
    <text evidence="1">Can catalyze the hydrolysis of ATP in the presence of single-stranded DNA, the ATP-dependent uptake of single-stranded DNA by duplex DNA, and the ATP-dependent hybridization of homologous single-stranded DNAs. It interacts with LexA causing its activation and leading to its autocatalytic cleavage.</text>
</comment>
<comment type="subcellular location">
    <subcellularLocation>
        <location evidence="1">Cytoplasm</location>
    </subcellularLocation>
</comment>
<comment type="similarity">
    <text evidence="1">Belongs to the RecA family.</text>
</comment>
<sequence>MAQAPDREKALELALAQIDKSFGKGSVMRLGDEVRQPISVIPTGSIALDVALGIGGLPRGRVIEIYGPESSGKTTVALHAVANAQRAGGIAAFIDAEHALDPEYAKKLGVDTDSLLVSQPDTGEQALEIADMLVRSGAIDLIVIDSVAALVPRAEIEGEMGDSHVGLQARLMSQALRKMTGALNNSGTTAIFINQLREKIGVMFGSPETTTGGKALKFYSSVRLDVRRIETLKDGTDAVGNRTRVKVVKNKVSPPFKQAEFDILYGKGISKEGSLIDMGVEQGFIRKSGSWFTYEGEQLGQGKENARNFLLENVDVANEIEKKIKEKLGIGAVLTDDEVVPAPVDF</sequence>
<name>RECA_MYCA9</name>
<proteinExistence type="inferred from homology"/>
<dbReference type="EMBL" id="CU458896">
    <property type="protein sequence ID" value="CAM63138.1"/>
    <property type="molecule type" value="Genomic_DNA"/>
</dbReference>
<dbReference type="RefSeq" id="WP_005057169.1">
    <property type="nucleotide sequence ID" value="NZ_MLCG01000003.1"/>
</dbReference>
<dbReference type="SMR" id="B1MD17"/>
<dbReference type="GeneID" id="93379993"/>
<dbReference type="KEGG" id="mab:MAB_3060c"/>
<dbReference type="Proteomes" id="UP000007137">
    <property type="component" value="Chromosome"/>
</dbReference>
<dbReference type="GO" id="GO:0005829">
    <property type="term" value="C:cytosol"/>
    <property type="evidence" value="ECO:0007669"/>
    <property type="project" value="TreeGrafter"/>
</dbReference>
<dbReference type="GO" id="GO:0005524">
    <property type="term" value="F:ATP binding"/>
    <property type="evidence" value="ECO:0007669"/>
    <property type="project" value="UniProtKB-UniRule"/>
</dbReference>
<dbReference type="GO" id="GO:0016887">
    <property type="term" value="F:ATP hydrolysis activity"/>
    <property type="evidence" value="ECO:0007669"/>
    <property type="project" value="InterPro"/>
</dbReference>
<dbReference type="GO" id="GO:0140664">
    <property type="term" value="F:ATP-dependent DNA damage sensor activity"/>
    <property type="evidence" value="ECO:0007669"/>
    <property type="project" value="InterPro"/>
</dbReference>
<dbReference type="GO" id="GO:0003684">
    <property type="term" value="F:damaged DNA binding"/>
    <property type="evidence" value="ECO:0007669"/>
    <property type="project" value="UniProtKB-UniRule"/>
</dbReference>
<dbReference type="GO" id="GO:0003697">
    <property type="term" value="F:single-stranded DNA binding"/>
    <property type="evidence" value="ECO:0007669"/>
    <property type="project" value="UniProtKB-UniRule"/>
</dbReference>
<dbReference type="GO" id="GO:0006310">
    <property type="term" value="P:DNA recombination"/>
    <property type="evidence" value="ECO:0007669"/>
    <property type="project" value="UniProtKB-UniRule"/>
</dbReference>
<dbReference type="GO" id="GO:0006281">
    <property type="term" value="P:DNA repair"/>
    <property type="evidence" value="ECO:0007669"/>
    <property type="project" value="UniProtKB-UniRule"/>
</dbReference>
<dbReference type="GO" id="GO:0009432">
    <property type="term" value="P:SOS response"/>
    <property type="evidence" value="ECO:0007669"/>
    <property type="project" value="UniProtKB-UniRule"/>
</dbReference>
<dbReference type="CDD" id="cd00983">
    <property type="entry name" value="RecA"/>
    <property type="match status" value="1"/>
</dbReference>
<dbReference type="FunFam" id="3.40.50.300:FF:002436">
    <property type="entry name" value="Protein RecA"/>
    <property type="match status" value="1"/>
</dbReference>
<dbReference type="Gene3D" id="3.40.50.300">
    <property type="entry name" value="P-loop containing nucleotide triphosphate hydrolases"/>
    <property type="match status" value="1"/>
</dbReference>
<dbReference type="HAMAP" id="MF_00268">
    <property type="entry name" value="RecA"/>
    <property type="match status" value="1"/>
</dbReference>
<dbReference type="InterPro" id="IPR003593">
    <property type="entry name" value="AAA+_ATPase"/>
</dbReference>
<dbReference type="InterPro" id="IPR013765">
    <property type="entry name" value="DNA_recomb/repair_RecA"/>
</dbReference>
<dbReference type="InterPro" id="IPR020584">
    <property type="entry name" value="DNA_recomb/repair_RecA_CS"/>
</dbReference>
<dbReference type="InterPro" id="IPR027417">
    <property type="entry name" value="P-loop_NTPase"/>
</dbReference>
<dbReference type="InterPro" id="IPR049261">
    <property type="entry name" value="RecA-like_C"/>
</dbReference>
<dbReference type="InterPro" id="IPR049428">
    <property type="entry name" value="RecA-like_N"/>
</dbReference>
<dbReference type="InterPro" id="IPR020588">
    <property type="entry name" value="RecA_ATP-bd"/>
</dbReference>
<dbReference type="InterPro" id="IPR023400">
    <property type="entry name" value="RecA_C_sf"/>
</dbReference>
<dbReference type="InterPro" id="IPR020587">
    <property type="entry name" value="RecA_monomer-monomer_interface"/>
</dbReference>
<dbReference type="NCBIfam" id="TIGR02012">
    <property type="entry name" value="tigrfam_recA"/>
    <property type="match status" value="1"/>
</dbReference>
<dbReference type="PANTHER" id="PTHR45900:SF1">
    <property type="entry name" value="MITOCHONDRIAL DNA REPAIR PROTEIN RECA HOMOLOG-RELATED"/>
    <property type="match status" value="1"/>
</dbReference>
<dbReference type="PANTHER" id="PTHR45900">
    <property type="entry name" value="RECA"/>
    <property type="match status" value="1"/>
</dbReference>
<dbReference type="Pfam" id="PF00154">
    <property type="entry name" value="RecA"/>
    <property type="match status" value="1"/>
</dbReference>
<dbReference type="Pfam" id="PF21096">
    <property type="entry name" value="RecA_C"/>
    <property type="match status" value="1"/>
</dbReference>
<dbReference type="PRINTS" id="PR00142">
    <property type="entry name" value="RECA"/>
</dbReference>
<dbReference type="SMART" id="SM00382">
    <property type="entry name" value="AAA"/>
    <property type="match status" value="1"/>
</dbReference>
<dbReference type="SUPFAM" id="SSF52540">
    <property type="entry name" value="P-loop containing nucleoside triphosphate hydrolases"/>
    <property type="match status" value="1"/>
</dbReference>
<dbReference type="SUPFAM" id="SSF54752">
    <property type="entry name" value="RecA protein, C-terminal domain"/>
    <property type="match status" value="1"/>
</dbReference>
<dbReference type="PROSITE" id="PS00321">
    <property type="entry name" value="RECA_1"/>
    <property type="match status" value="1"/>
</dbReference>
<dbReference type="PROSITE" id="PS50162">
    <property type="entry name" value="RECA_2"/>
    <property type="match status" value="1"/>
</dbReference>
<dbReference type="PROSITE" id="PS50163">
    <property type="entry name" value="RECA_3"/>
    <property type="match status" value="1"/>
</dbReference>
<accession>B1MD17</accession>
<evidence type="ECO:0000255" key="1">
    <source>
        <dbReference type="HAMAP-Rule" id="MF_00268"/>
    </source>
</evidence>
<gene>
    <name evidence="1" type="primary">recA</name>
    <name type="ordered locus">MAB_3060c</name>
</gene>
<organism>
    <name type="scientific">Mycobacteroides abscessus (strain ATCC 19977 / DSM 44196 / CCUG 20993 / CIP 104536 / JCM 13569 / NCTC 13031 / TMC 1543 / L948)</name>
    <name type="common">Mycobacterium abscessus</name>
    <dbReference type="NCBI Taxonomy" id="561007"/>
    <lineage>
        <taxon>Bacteria</taxon>
        <taxon>Bacillati</taxon>
        <taxon>Actinomycetota</taxon>
        <taxon>Actinomycetes</taxon>
        <taxon>Mycobacteriales</taxon>
        <taxon>Mycobacteriaceae</taxon>
        <taxon>Mycobacteroides</taxon>
        <taxon>Mycobacteroides abscessus</taxon>
    </lineage>
</organism>
<feature type="chain" id="PRO_1000114348" description="Protein RecA">
    <location>
        <begin position="1"/>
        <end position="346"/>
    </location>
</feature>
<feature type="binding site" evidence="1">
    <location>
        <begin position="67"/>
        <end position="74"/>
    </location>
    <ligand>
        <name>ATP</name>
        <dbReference type="ChEBI" id="CHEBI:30616"/>
    </ligand>
</feature>